<name>DAD1_SOLLC</name>
<organism>
    <name type="scientific">Solanum lycopersicum</name>
    <name type="common">Tomato</name>
    <name type="synonym">Lycopersicon esculentum</name>
    <dbReference type="NCBI Taxonomy" id="4081"/>
    <lineage>
        <taxon>Eukaryota</taxon>
        <taxon>Viridiplantae</taxon>
        <taxon>Streptophyta</taxon>
        <taxon>Embryophyta</taxon>
        <taxon>Tracheophyta</taxon>
        <taxon>Spermatophyta</taxon>
        <taxon>Magnoliopsida</taxon>
        <taxon>eudicotyledons</taxon>
        <taxon>Gunneridae</taxon>
        <taxon>Pentapetalae</taxon>
        <taxon>asterids</taxon>
        <taxon>lamiids</taxon>
        <taxon>Solanales</taxon>
        <taxon>Solanaceae</taxon>
        <taxon>Solanoideae</taxon>
        <taxon>Solaneae</taxon>
        <taxon>Solanum</taxon>
        <taxon>Solanum subgen. Lycopersicon</taxon>
    </lineage>
</organism>
<feature type="chain" id="PRO_0000124025" description="Dolichyl-diphosphooligosaccharide--protein glycosyltransferase subunit DAD1">
    <location>
        <begin position="1"/>
        <end position="116"/>
    </location>
</feature>
<feature type="topological domain" description="Cytoplasmic" evidence="3">
    <location>
        <begin position="1"/>
        <end position="32"/>
    </location>
</feature>
<feature type="transmembrane region" description="Helical" evidence="3">
    <location>
        <begin position="33"/>
        <end position="53"/>
    </location>
</feature>
<feature type="topological domain" description="Lumenal" evidence="3">
    <location>
        <begin position="54"/>
        <end position="56"/>
    </location>
</feature>
<feature type="transmembrane region" description="Helical" evidence="3">
    <location>
        <begin position="57"/>
        <end position="77"/>
    </location>
</feature>
<feature type="topological domain" description="Cytoplasmic" evidence="3">
    <location>
        <begin position="78"/>
        <end position="95"/>
    </location>
</feature>
<feature type="transmembrane region" description="Helical" evidence="3">
    <location>
        <begin position="96"/>
        <end position="116"/>
    </location>
</feature>
<dbReference type="EMBL" id="AJ250003">
    <property type="protein sequence ID" value="CAB61887.1"/>
    <property type="molecule type" value="mRNA"/>
</dbReference>
<dbReference type="RefSeq" id="NP_001233817.1">
    <property type="nucleotide sequence ID" value="NM_001246888.1"/>
</dbReference>
<dbReference type="SMR" id="Q9SMC4"/>
<dbReference type="FunCoup" id="Q9SMC4">
    <property type="interactions" value="3266"/>
</dbReference>
<dbReference type="STRING" id="4081.Q9SMC4"/>
<dbReference type="PaxDb" id="4081-Solyc08g076460.2.1"/>
<dbReference type="EnsemblPlants" id="Solyc08g076460.3.1">
    <property type="protein sequence ID" value="Solyc08g076460.3.1"/>
    <property type="gene ID" value="Solyc08g076460.3"/>
</dbReference>
<dbReference type="GeneID" id="543753"/>
<dbReference type="Gramene" id="Solyc08g076460.3.1">
    <property type="protein sequence ID" value="Solyc08g076460.3.1"/>
    <property type="gene ID" value="Solyc08g076460.3"/>
</dbReference>
<dbReference type="KEGG" id="sly:543753"/>
<dbReference type="eggNOG" id="KOG1746">
    <property type="taxonomic scope" value="Eukaryota"/>
</dbReference>
<dbReference type="HOGENOM" id="CLU_111220_2_0_1"/>
<dbReference type="InParanoid" id="Q9SMC4"/>
<dbReference type="OMA" id="HIILHIV"/>
<dbReference type="OrthoDB" id="445566at2759"/>
<dbReference type="PhylomeDB" id="Q9SMC4"/>
<dbReference type="UniPathway" id="UPA00378"/>
<dbReference type="Proteomes" id="UP000004994">
    <property type="component" value="Chromosome 8"/>
</dbReference>
<dbReference type="GO" id="GO:0008250">
    <property type="term" value="C:oligosaccharyltransferase complex"/>
    <property type="evidence" value="ECO:0000318"/>
    <property type="project" value="GO_Central"/>
</dbReference>
<dbReference type="GO" id="GO:0006487">
    <property type="term" value="P:protein N-linked glycosylation"/>
    <property type="evidence" value="ECO:0000318"/>
    <property type="project" value="GO_Central"/>
</dbReference>
<dbReference type="InterPro" id="IPR003038">
    <property type="entry name" value="DAD/Ost2"/>
</dbReference>
<dbReference type="PANTHER" id="PTHR10705">
    <property type="entry name" value="DOLICHYL-DIPHOSPHOOLIGOSACCHARIDE--PROTEIN GLYCOSYLTRANSFERASE SUBUNIT DAD1"/>
    <property type="match status" value="1"/>
</dbReference>
<dbReference type="PANTHER" id="PTHR10705:SF2">
    <property type="entry name" value="DOLICHYL-DIPHOSPHOOLIGOSACCHARIDE--PROTEIN GLYCOSYLTRANSFERASE SUBUNIT DAD1"/>
    <property type="match status" value="1"/>
</dbReference>
<dbReference type="Pfam" id="PF02109">
    <property type="entry name" value="DAD"/>
    <property type="match status" value="1"/>
</dbReference>
<dbReference type="PIRSF" id="PIRSF005588">
    <property type="entry name" value="DAD"/>
    <property type="match status" value="1"/>
</dbReference>
<accession>Q9SMC4</accession>
<gene>
    <name type="primary">DAD1</name>
</gene>
<comment type="function">
    <text evidence="2">Subunit of the oligosaccharyl transferase (OST) complex that catalyzes the initial transfer of a defined glycan (Glc(3)Man(9)GlcNAc(2) in eukaryotes) from the lipid carrier dolichol-pyrophosphate to an asparagine residue within an Asn-X-Ser/Thr consensus motif in nascent polypeptide chains, the first step in protein N-glycosylation. N-glycosylation occurs cotranslationally and the complex associates with the Sec61 complex at the channel-forming translocon complex that mediates protein translocation across the endoplasmic reticulum (ER). All subunits are required for a maximal enzyme activity.</text>
</comment>
<comment type="pathway">
    <text>Protein modification; protein glycosylation.</text>
</comment>
<comment type="subunit">
    <text evidence="2">Component of the oligosaccharyltransferase (OST) complex.</text>
</comment>
<comment type="subcellular location">
    <subcellularLocation>
        <location evidence="1">Endoplasmic reticulum membrane</location>
        <topology evidence="1">Multi-pass membrane protein</topology>
    </subcellularLocation>
</comment>
<comment type="similarity">
    <text evidence="4">Belongs to the DAD/OST2 family.</text>
</comment>
<sequence length="116" mass="12671">MAKSSATKDAQALFHSLRSAYAATPTNLKIIDLYVIFAISTALIQVVYMAIVGSFPFNSFLSGVLSCIGTAVLAVCLRIQVNKENKEFKDLPPERAFADFVLCNLVLHLVIMNFLG</sequence>
<reference key="1">
    <citation type="journal article" date="2001" name="J. Plant Physiol.">
        <title>Cloning and analysis of a defender against apoptotic cell death (DAD1) homologue from tomato.</title>
        <authorList>
            <person name="Hoeberichts F.A."/>
            <person name="Woltering E.J."/>
        </authorList>
    </citation>
    <scope>NUCLEOTIDE SEQUENCE [MRNA]</scope>
    <source>
        <strain>cv. Prisca</strain>
    </source>
</reference>
<keyword id="KW-0053">Apoptosis</keyword>
<keyword id="KW-0256">Endoplasmic reticulum</keyword>
<keyword id="KW-0472">Membrane</keyword>
<keyword id="KW-1185">Reference proteome</keyword>
<keyword id="KW-0812">Transmembrane</keyword>
<keyword id="KW-1133">Transmembrane helix</keyword>
<evidence type="ECO:0000250" key="1"/>
<evidence type="ECO:0000250" key="2">
    <source>
        <dbReference type="UniProtKB" id="P46964"/>
    </source>
</evidence>
<evidence type="ECO:0000255" key="3"/>
<evidence type="ECO:0000305" key="4"/>
<protein>
    <recommendedName>
        <fullName>Dolichyl-diphosphooligosaccharide--protein glycosyltransferase subunit DAD1</fullName>
        <shortName>Oligosaccharyl transferase subunit DAD1</shortName>
    </recommendedName>
    <alternativeName>
        <fullName>Defender against cell death 1</fullName>
        <shortName>DAD-1</shortName>
    </alternativeName>
</protein>
<proteinExistence type="inferred from homology"/>